<accession>Q8D284</accession>
<comment type="similarity">
    <text evidence="1">Belongs to the bacterial ribosomal protein bS21 family.</text>
</comment>
<reference key="1">
    <citation type="journal article" date="2002" name="Nat. Genet.">
        <title>Genome sequence of the endocellular obligate symbiont of tsetse flies, Wigglesworthia glossinidia.</title>
        <authorList>
            <person name="Akman L."/>
            <person name="Yamashita A."/>
            <person name="Watanabe H."/>
            <person name="Oshima K."/>
            <person name="Shiba T."/>
            <person name="Hattori M."/>
            <person name="Aksoy S."/>
        </authorList>
    </citation>
    <scope>NUCLEOTIDE SEQUENCE [LARGE SCALE GENOMIC DNA]</scope>
</reference>
<evidence type="ECO:0000255" key="1">
    <source>
        <dbReference type="HAMAP-Rule" id="MF_00358"/>
    </source>
</evidence>
<evidence type="ECO:0000305" key="2"/>
<dbReference type="EMBL" id="BA000021">
    <property type="protein sequence ID" value="BAC24616.1"/>
    <property type="molecule type" value="Genomic_DNA"/>
</dbReference>
<dbReference type="SMR" id="Q8D284"/>
<dbReference type="STRING" id="36870.gene:10368974"/>
<dbReference type="KEGG" id="wbr:rpsU"/>
<dbReference type="eggNOG" id="COG0828">
    <property type="taxonomic scope" value="Bacteria"/>
</dbReference>
<dbReference type="HOGENOM" id="CLU_159258_1_0_6"/>
<dbReference type="OrthoDB" id="9799244at2"/>
<dbReference type="Proteomes" id="UP000000562">
    <property type="component" value="Chromosome"/>
</dbReference>
<dbReference type="GO" id="GO:1990904">
    <property type="term" value="C:ribonucleoprotein complex"/>
    <property type="evidence" value="ECO:0007669"/>
    <property type="project" value="UniProtKB-KW"/>
</dbReference>
<dbReference type="GO" id="GO:0005840">
    <property type="term" value="C:ribosome"/>
    <property type="evidence" value="ECO:0007669"/>
    <property type="project" value="UniProtKB-KW"/>
</dbReference>
<dbReference type="GO" id="GO:0003735">
    <property type="term" value="F:structural constituent of ribosome"/>
    <property type="evidence" value="ECO:0007669"/>
    <property type="project" value="InterPro"/>
</dbReference>
<dbReference type="GO" id="GO:0006412">
    <property type="term" value="P:translation"/>
    <property type="evidence" value="ECO:0007669"/>
    <property type="project" value="UniProtKB-UniRule"/>
</dbReference>
<dbReference type="FunFam" id="1.20.5.1150:FF:000001">
    <property type="entry name" value="30S ribosomal protein S21"/>
    <property type="match status" value="1"/>
</dbReference>
<dbReference type="Gene3D" id="1.20.5.1150">
    <property type="entry name" value="Ribosomal protein S8"/>
    <property type="match status" value="1"/>
</dbReference>
<dbReference type="HAMAP" id="MF_00358">
    <property type="entry name" value="Ribosomal_bS21"/>
    <property type="match status" value="1"/>
</dbReference>
<dbReference type="InterPro" id="IPR001911">
    <property type="entry name" value="Ribosomal_bS21"/>
</dbReference>
<dbReference type="InterPro" id="IPR018278">
    <property type="entry name" value="Ribosomal_bS21_CS"/>
</dbReference>
<dbReference type="InterPro" id="IPR038380">
    <property type="entry name" value="Ribosomal_bS21_sf"/>
</dbReference>
<dbReference type="NCBIfam" id="TIGR00030">
    <property type="entry name" value="S21p"/>
    <property type="match status" value="1"/>
</dbReference>
<dbReference type="PANTHER" id="PTHR21109">
    <property type="entry name" value="MITOCHONDRIAL 28S RIBOSOMAL PROTEIN S21"/>
    <property type="match status" value="1"/>
</dbReference>
<dbReference type="PANTHER" id="PTHR21109:SF22">
    <property type="entry name" value="SMALL RIBOSOMAL SUBUNIT PROTEIN BS21"/>
    <property type="match status" value="1"/>
</dbReference>
<dbReference type="Pfam" id="PF01165">
    <property type="entry name" value="Ribosomal_S21"/>
    <property type="match status" value="1"/>
</dbReference>
<dbReference type="PRINTS" id="PR00976">
    <property type="entry name" value="RIBOSOMALS21"/>
</dbReference>
<dbReference type="PROSITE" id="PS01181">
    <property type="entry name" value="RIBOSOMAL_S21"/>
    <property type="match status" value="1"/>
</dbReference>
<protein>
    <recommendedName>
        <fullName evidence="1">Small ribosomal subunit protein bS21</fullName>
    </recommendedName>
    <alternativeName>
        <fullName evidence="2">30S ribosomal protein S21</fullName>
    </alternativeName>
</protein>
<sequence length="71" mass="8582">MPIIKIRENEPFDVALRRFKRSCEKAGILSEVRRREFYEKPTTERKRAKASAIKRHAKKMARENLKKTKFY</sequence>
<organism>
    <name type="scientific">Wigglesworthia glossinidia brevipalpis</name>
    <dbReference type="NCBI Taxonomy" id="36870"/>
    <lineage>
        <taxon>Bacteria</taxon>
        <taxon>Pseudomonadati</taxon>
        <taxon>Pseudomonadota</taxon>
        <taxon>Gammaproteobacteria</taxon>
        <taxon>Enterobacterales</taxon>
        <taxon>Erwiniaceae</taxon>
        <taxon>Wigglesworthia</taxon>
    </lineage>
</organism>
<keyword id="KW-1185">Reference proteome</keyword>
<keyword id="KW-0687">Ribonucleoprotein</keyword>
<keyword id="KW-0689">Ribosomal protein</keyword>
<gene>
    <name evidence="1" type="primary">rpsU</name>
    <name type="ordered locus">WIGBR4700</name>
</gene>
<feature type="chain" id="PRO_0000178403" description="Small ribosomal subunit protein bS21">
    <location>
        <begin position="1"/>
        <end position="71"/>
    </location>
</feature>
<proteinExistence type="inferred from homology"/>
<name>RS21_WIGBR</name>